<protein>
    <recommendedName>
        <fullName>Cadherin-22</fullName>
    </recommendedName>
    <alternativeName>
        <fullName>Pituitary and brain cadherin</fullName>
        <shortName>PB-cadherin</shortName>
    </alternativeName>
</protein>
<accession>Q9UJ99</accession>
<accession>B9EGK7</accession>
<accession>O43205</accession>
<evidence type="ECO:0000250" key="1"/>
<evidence type="ECO:0000255" key="2"/>
<evidence type="ECO:0000255" key="3">
    <source>
        <dbReference type="PROSITE-ProRule" id="PRU00043"/>
    </source>
</evidence>
<evidence type="ECO:0000256" key="4">
    <source>
        <dbReference type="SAM" id="MobiDB-lite"/>
    </source>
</evidence>
<proteinExistence type="evidence at protein level"/>
<dbReference type="EMBL" id="AL031687">
    <property type="status" value="NOT_ANNOTATED_CDS"/>
    <property type="molecule type" value="Genomic_DNA"/>
</dbReference>
<dbReference type="EMBL" id="CH471077">
    <property type="protein sequence ID" value="EAW75755.1"/>
    <property type="molecule type" value="Genomic_DNA"/>
</dbReference>
<dbReference type="EMBL" id="BC136526">
    <property type="protein sequence ID" value="AAI36527.1"/>
    <property type="molecule type" value="mRNA"/>
</dbReference>
<dbReference type="EMBL" id="AF035300">
    <property type="protein sequence ID" value="AAB88183.1"/>
    <property type="molecule type" value="mRNA"/>
</dbReference>
<dbReference type="CCDS" id="CCDS13395.1"/>
<dbReference type="RefSeq" id="NP_067071.1">
    <property type="nucleotide sequence ID" value="NM_021248.3"/>
</dbReference>
<dbReference type="RefSeq" id="XP_011527296.1">
    <property type="nucleotide sequence ID" value="XM_011528994.3"/>
</dbReference>
<dbReference type="RefSeq" id="XP_054179817.1">
    <property type="nucleotide sequence ID" value="XM_054323842.1"/>
</dbReference>
<dbReference type="SMR" id="Q9UJ99"/>
<dbReference type="BioGRID" id="122159">
    <property type="interactions" value="2"/>
</dbReference>
<dbReference type="FunCoup" id="Q9UJ99">
    <property type="interactions" value="56"/>
</dbReference>
<dbReference type="STRING" id="9606.ENSP00000437790"/>
<dbReference type="GlyCosmos" id="Q9UJ99">
    <property type="glycosylation" value="3 sites, No reported glycans"/>
</dbReference>
<dbReference type="GlyGen" id="Q9UJ99">
    <property type="glycosylation" value="8 sites, 1 O-linked glycan (4 sites)"/>
</dbReference>
<dbReference type="iPTMnet" id="Q9UJ99"/>
<dbReference type="PhosphoSitePlus" id="Q9UJ99"/>
<dbReference type="BioMuta" id="CDH22"/>
<dbReference type="DMDM" id="24211543"/>
<dbReference type="MassIVE" id="Q9UJ99"/>
<dbReference type="PaxDb" id="9606-ENSP00000437790"/>
<dbReference type="PeptideAtlas" id="Q9UJ99"/>
<dbReference type="ProteomicsDB" id="84607"/>
<dbReference type="Antibodypedia" id="2513">
    <property type="antibodies" value="122 antibodies from 22 providers"/>
</dbReference>
<dbReference type="DNASU" id="64405"/>
<dbReference type="Ensembl" id="ENST00000537909.4">
    <property type="protein sequence ID" value="ENSP00000437790.1"/>
    <property type="gene ID" value="ENSG00000149654.11"/>
</dbReference>
<dbReference type="GeneID" id="64405"/>
<dbReference type="KEGG" id="hsa:64405"/>
<dbReference type="MANE-Select" id="ENST00000537909.4">
    <property type="protein sequence ID" value="ENSP00000437790.1"/>
    <property type="RefSeq nucleotide sequence ID" value="NM_021248.3"/>
    <property type="RefSeq protein sequence ID" value="NP_067071.1"/>
</dbReference>
<dbReference type="UCSC" id="uc010ghk.3">
    <property type="organism name" value="human"/>
</dbReference>
<dbReference type="AGR" id="HGNC:13251"/>
<dbReference type="CTD" id="64405"/>
<dbReference type="DisGeNET" id="64405"/>
<dbReference type="GeneCards" id="CDH22"/>
<dbReference type="HGNC" id="HGNC:13251">
    <property type="gene designation" value="CDH22"/>
</dbReference>
<dbReference type="HPA" id="ENSG00000149654">
    <property type="expression patterns" value="Tissue enriched (brain)"/>
</dbReference>
<dbReference type="MIM" id="609920">
    <property type="type" value="gene"/>
</dbReference>
<dbReference type="neXtProt" id="NX_Q9UJ99"/>
<dbReference type="OpenTargets" id="ENSG00000149654"/>
<dbReference type="PharmGKB" id="PA26295"/>
<dbReference type="VEuPathDB" id="HostDB:ENSG00000149654"/>
<dbReference type="eggNOG" id="KOG3594">
    <property type="taxonomic scope" value="Eukaryota"/>
</dbReference>
<dbReference type="GeneTree" id="ENSGT00940000159376"/>
<dbReference type="HOGENOM" id="CLU_005284_3_1_1"/>
<dbReference type="InParanoid" id="Q9UJ99"/>
<dbReference type="OMA" id="GAWAMHT"/>
<dbReference type="OrthoDB" id="6252479at2759"/>
<dbReference type="PAN-GO" id="Q9UJ99">
    <property type="GO annotations" value="9 GO annotations based on evolutionary models"/>
</dbReference>
<dbReference type="PhylomeDB" id="Q9UJ99"/>
<dbReference type="TreeFam" id="TF329887"/>
<dbReference type="PathwayCommons" id="Q9UJ99"/>
<dbReference type="SIGNOR" id="Q9UJ99"/>
<dbReference type="BioGRID-ORCS" id="64405">
    <property type="hits" value="12 hits in 1138 CRISPR screens"/>
</dbReference>
<dbReference type="ChiTaRS" id="CDH22">
    <property type="organism name" value="human"/>
</dbReference>
<dbReference type="GenomeRNAi" id="64405"/>
<dbReference type="Pharos" id="Q9UJ99">
    <property type="development level" value="Tbio"/>
</dbReference>
<dbReference type="PRO" id="PR:Q9UJ99"/>
<dbReference type="Proteomes" id="UP000005640">
    <property type="component" value="Chromosome 20"/>
</dbReference>
<dbReference type="RNAct" id="Q9UJ99">
    <property type="molecule type" value="protein"/>
</dbReference>
<dbReference type="Bgee" id="ENSG00000149654">
    <property type="expression patterns" value="Expressed in cerebellar vermis and 118 other cell types or tissues"/>
</dbReference>
<dbReference type="GO" id="GO:0005912">
    <property type="term" value="C:adherens junction"/>
    <property type="evidence" value="ECO:0000318"/>
    <property type="project" value="GO_Central"/>
</dbReference>
<dbReference type="GO" id="GO:0016342">
    <property type="term" value="C:catenin complex"/>
    <property type="evidence" value="ECO:0000318"/>
    <property type="project" value="GO_Central"/>
</dbReference>
<dbReference type="GO" id="GO:0008013">
    <property type="term" value="F:beta-catenin binding"/>
    <property type="evidence" value="ECO:0000318"/>
    <property type="project" value="GO_Central"/>
</dbReference>
<dbReference type="GO" id="GO:0045296">
    <property type="term" value="F:cadherin binding"/>
    <property type="evidence" value="ECO:0000318"/>
    <property type="project" value="GO_Central"/>
</dbReference>
<dbReference type="GO" id="GO:0005509">
    <property type="term" value="F:calcium ion binding"/>
    <property type="evidence" value="ECO:0007669"/>
    <property type="project" value="InterPro"/>
</dbReference>
<dbReference type="GO" id="GO:0034332">
    <property type="term" value="P:adherens junction organization"/>
    <property type="evidence" value="ECO:0000318"/>
    <property type="project" value="GO_Central"/>
</dbReference>
<dbReference type="GO" id="GO:0016339">
    <property type="term" value="P:calcium-dependent cell-cell adhesion via plasma membrane cell adhesion molecules"/>
    <property type="evidence" value="ECO:0000318"/>
    <property type="project" value="GO_Central"/>
</dbReference>
<dbReference type="GO" id="GO:0016477">
    <property type="term" value="P:cell migration"/>
    <property type="evidence" value="ECO:0000318"/>
    <property type="project" value="GO_Central"/>
</dbReference>
<dbReference type="GO" id="GO:0000902">
    <property type="term" value="P:cell morphogenesis"/>
    <property type="evidence" value="ECO:0000318"/>
    <property type="project" value="GO_Central"/>
</dbReference>
<dbReference type="GO" id="GO:0044331">
    <property type="term" value="P:cell-cell adhesion mediated by cadherin"/>
    <property type="evidence" value="ECO:0000318"/>
    <property type="project" value="GO_Central"/>
</dbReference>
<dbReference type="GO" id="GO:0007043">
    <property type="term" value="P:cell-cell junction assembly"/>
    <property type="evidence" value="ECO:0000318"/>
    <property type="project" value="GO_Central"/>
</dbReference>
<dbReference type="GO" id="GO:0007156">
    <property type="term" value="P:homophilic cell adhesion via plasma membrane adhesion molecules"/>
    <property type="evidence" value="ECO:0007669"/>
    <property type="project" value="InterPro"/>
</dbReference>
<dbReference type="CDD" id="cd11304">
    <property type="entry name" value="Cadherin_repeat"/>
    <property type="match status" value="5"/>
</dbReference>
<dbReference type="FunFam" id="4.10.900.10:FF:000007">
    <property type="entry name" value="Cadherin 22"/>
    <property type="match status" value="1"/>
</dbReference>
<dbReference type="FunFam" id="2.60.40.60:FF:000008">
    <property type="entry name" value="Cadherin 24"/>
    <property type="match status" value="1"/>
</dbReference>
<dbReference type="FunFam" id="2.60.40.60:FF:000009">
    <property type="entry name" value="Cadherin 24"/>
    <property type="match status" value="1"/>
</dbReference>
<dbReference type="FunFam" id="2.60.40.60:FF:000012">
    <property type="entry name" value="Cadherin 24"/>
    <property type="match status" value="1"/>
</dbReference>
<dbReference type="FunFam" id="2.60.40.60:FF:000017">
    <property type="entry name" value="Cadherin 24"/>
    <property type="match status" value="1"/>
</dbReference>
<dbReference type="FunFam" id="2.60.40.60:FF:000014">
    <property type="entry name" value="Cadherin 8"/>
    <property type="match status" value="1"/>
</dbReference>
<dbReference type="Gene3D" id="2.60.40.60">
    <property type="entry name" value="Cadherins"/>
    <property type="match status" value="5"/>
</dbReference>
<dbReference type="Gene3D" id="4.10.900.10">
    <property type="entry name" value="TCF3-CBD (Catenin binding domain)"/>
    <property type="match status" value="1"/>
</dbReference>
<dbReference type="InterPro" id="IPR039808">
    <property type="entry name" value="Cadherin"/>
</dbReference>
<dbReference type="InterPro" id="IPR002126">
    <property type="entry name" value="Cadherin-like_dom"/>
</dbReference>
<dbReference type="InterPro" id="IPR015919">
    <property type="entry name" value="Cadherin-like_sf"/>
</dbReference>
<dbReference type="InterPro" id="IPR020894">
    <property type="entry name" value="Cadherin_CS"/>
</dbReference>
<dbReference type="InterPro" id="IPR000233">
    <property type="entry name" value="Cadherin_Y-type_LIR"/>
</dbReference>
<dbReference type="InterPro" id="IPR027397">
    <property type="entry name" value="Catenin-bd_sf"/>
</dbReference>
<dbReference type="PANTHER" id="PTHR24027:SF311">
    <property type="entry name" value="CADHERIN-22"/>
    <property type="match status" value="1"/>
</dbReference>
<dbReference type="PANTHER" id="PTHR24027">
    <property type="entry name" value="CADHERIN-23"/>
    <property type="match status" value="1"/>
</dbReference>
<dbReference type="Pfam" id="PF01049">
    <property type="entry name" value="CADH_Y-type_LIR"/>
    <property type="match status" value="1"/>
</dbReference>
<dbReference type="Pfam" id="PF00028">
    <property type="entry name" value="Cadherin"/>
    <property type="match status" value="5"/>
</dbReference>
<dbReference type="PRINTS" id="PR00205">
    <property type="entry name" value="CADHERIN"/>
</dbReference>
<dbReference type="SMART" id="SM00112">
    <property type="entry name" value="CA"/>
    <property type="match status" value="5"/>
</dbReference>
<dbReference type="SUPFAM" id="SSF49313">
    <property type="entry name" value="Cadherin-like"/>
    <property type="match status" value="5"/>
</dbReference>
<dbReference type="PROSITE" id="PS00232">
    <property type="entry name" value="CADHERIN_1"/>
    <property type="match status" value="2"/>
</dbReference>
<dbReference type="PROSITE" id="PS50268">
    <property type="entry name" value="CADHERIN_2"/>
    <property type="match status" value="5"/>
</dbReference>
<reference key="1">
    <citation type="journal article" date="2001" name="Nature">
        <title>The DNA sequence and comparative analysis of human chromosome 20.</title>
        <authorList>
            <person name="Deloukas P."/>
            <person name="Matthews L.H."/>
            <person name="Ashurst J.L."/>
            <person name="Burton J."/>
            <person name="Gilbert J.G.R."/>
            <person name="Jones M."/>
            <person name="Stavrides G."/>
            <person name="Almeida J.P."/>
            <person name="Babbage A.K."/>
            <person name="Bagguley C.L."/>
            <person name="Bailey J."/>
            <person name="Barlow K.F."/>
            <person name="Bates K.N."/>
            <person name="Beard L.M."/>
            <person name="Beare D.M."/>
            <person name="Beasley O.P."/>
            <person name="Bird C.P."/>
            <person name="Blakey S.E."/>
            <person name="Bridgeman A.M."/>
            <person name="Brown A.J."/>
            <person name="Buck D."/>
            <person name="Burrill W.D."/>
            <person name="Butler A.P."/>
            <person name="Carder C."/>
            <person name="Carter N.P."/>
            <person name="Chapman J.C."/>
            <person name="Clamp M."/>
            <person name="Clark G."/>
            <person name="Clark L.N."/>
            <person name="Clark S.Y."/>
            <person name="Clee C.M."/>
            <person name="Clegg S."/>
            <person name="Cobley V.E."/>
            <person name="Collier R.E."/>
            <person name="Connor R.E."/>
            <person name="Corby N.R."/>
            <person name="Coulson A."/>
            <person name="Coville G.J."/>
            <person name="Deadman R."/>
            <person name="Dhami P.D."/>
            <person name="Dunn M."/>
            <person name="Ellington A.G."/>
            <person name="Frankland J.A."/>
            <person name="Fraser A."/>
            <person name="French L."/>
            <person name="Garner P."/>
            <person name="Grafham D.V."/>
            <person name="Griffiths C."/>
            <person name="Griffiths M.N.D."/>
            <person name="Gwilliam R."/>
            <person name="Hall R.E."/>
            <person name="Hammond S."/>
            <person name="Harley J.L."/>
            <person name="Heath P.D."/>
            <person name="Ho S."/>
            <person name="Holden J.L."/>
            <person name="Howden P.J."/>
            <person name="Huckle E."/>
            <person name="Hunt A.R."/>
            <person name="Hunt S.E."/>
            <person name="Jekosch K."/>
            <person name="Johnson C.M."/>
            <person name="Johnson D."/>
            <person name="Kay M.P."/>
            <person name="Kimberley A.M."/>
            <person name="King A."/>
            <person name="Knights A."/>
            <person name="Laird G.K."/>
            <person name="Lawlor S."/>
            <person name="Lehvaeslaiho M.H."/>
            <person name="Leversha M.A."/>
            <person name="Lloyd C."/>
            <person name="Lloyd D.M."/>
            <person name="Lovell J.D."/>
            <person name="Marsh V.L."/>
            <person name="Martin S.L."/>
            <person name="McConnachie L.J."/>
            <person name="McLay K."/>
            <person name="McMurray A.A."/>
            <person name="Milne S.A."/>
            <person name="Mistry D."/>
            <person name="Moore M.J.F."/>
            <person name="Mullikin J.C."/>
            <person name="Nickerson T."/>
            <person name="Oliver K."/>
            <person name="Parker A."/>
            <person name="Patel R."/>
            <person name="Pearce T.A.V."/>
            <person name="Peck A.I."/>
            <person name="Phillimore B.J.C.T."/>
            <person name="Prathalingam S.R."/>
            <person name="Plumb R.W."/>
            <person name="Ramsay H."/>
            <person name="Rice C.M."/>
            <person name="Ross M.T."/>
            <person name="Scott C.E."/>
            <person name="Sehra H.K."/>
            <person name="Shownkeen R."/>
            <person name="Sims S."/>
            <person name="Skuce C.D."/>
            <person name="Smith M.L."/>
            <person name="Soderlund C."/>
            <person name="Steward C.A."/>
            <person name="Sulston J.E."/>
            <person name="Swann R.M."/>
            <person name="Sycamore N."/>
            <person name="Taylor R."/>
            <person name="Tee L."/>
            <person name="Thomas D.W."/>
            <person name="Thorpe A."/>
            <person name="Tracey A."/>
            <person name="Tromans A.C."/>
            <person name="Vaudin M."/>
            <person name="Wall M."/>
            <person name="Wallis J.M."/>
            <person name="Whitehead S.L."/>
            <person name="Whittaker P."/>
            <person name="Willey D.L."/>
            <person name="Williams L."/>
            <person name="Williams S.A."/>
            <person name="Wilming L."/>
            <person name="Wray P.W."/>
            <person name="Hubbard T."/>
            <person name="Durbin R.M."/>
            <person name="Bentley D.R."/>
            <person name="Beck S."/>
            <person name="Rogers J."/>
        </authorList>
    </citation>
    <scope>NUCLEOTIDE SEQUENCE [LARGE SCALE GENOMIC DNA]</scope>
</reference>
<reference key="2">
    <citation type="submission" date="2005-09" db="EMBL/GenBank/DDBJ databases">
        <authorList>
            <person name="Mural R.J."/>
            <person name="Istrail S."/>
            <person name="Sutton G.G."/>
            <person name="Florea L."/>
            <person name="Halpern A.L."/>
            <person name="Mobarry C.M."/>
            <person name="Lippert R."/>
            <person name="Walenz B."/>
            <person name="Shatkay H."/>
            <person name="Dew I."/>
            <person name="Miller J.R."/>
            <person name="Flanigan M.J."/>
            <person name="Edwards N.J."/>
            <person name="Bolanos R."/>
            <person name="Fasulo D."/>
            <person name="Halldorsson B.V."/>
            <person name="Hannenhalli S."/>
            <person name="Turner R."/>
            <person name="Yooseph S."/>
            <person name="Lu F."/>
            <person name="Nusskern D.R."/>
            <person name="Shue B.C."/>
            <person name="Zheng X.H."/>
            <person name="Zhong F."/>
            <person name="Delcher A.L."/>
            <person name="Huson D.H."/>
            <person name="Kravitz S.A."/>
            <person name="Mouchard L."/>
            <person name="Reinert K."/>
            <person name="Remington K.A."/>
            <person name="Clark A.G."/>
            <person name="Waterman M.S."/>
            <person name="Eichler E.E."/>
            <person name="Adams M.D."/>
            <person name="Hunkapiller M.W."/>
            <person name="Myers E.W."/>
            <person name="Venter J.C."/>
        </authorList>
    </citation>
    <scope>NUCLEOTIDE SEQUENCE [LARGE SCALE GENOMIC DNA]</scope>
</reference>
<reference key="3">
    <citation type="journal article" date="2004" name="Genome Res.">
        <title>The status, quality, and expansion of the NIH full-length cDNA project: the Mammalian Gene Collection (MGC).</title>
        <authorList>
            <consortium name="The MGC Project Team"/>
        </authorList>
    </citation>
    <scope>NUCLEOTIDE SEQUENCE [LARGE SCALE MRNA]</scope>
</reference>
<reference key="4">
    <citation type="submission" date="1997-11" db="EMBL/GenBank/DDBJ databases">
        <authorList>
            <person name="Yu W."/>
            <person name="Sarginson J."/>
            <person name="Gibbs R.A."/>
        </authorList>
    </citation>
    <scope>NUCLEOTIDE SEQUENCE [LARGE SCALE MRNA] OF 449-828</scope>
    <source>
        <tissue>Brain</tissue>
    </source>
</reference>
<gene>
    <name type="primary">CDH22</name>
    <name type="synonym">C20orf25</name>
</gene>
<comment type="function">
    <text evidence="1">Cadherins are calcium-dependent cell adhesion proteins. They preferentially interact with themselves in a homophilic manner in connecting cells; cadherins may thus contribute to the sorting of heterogeneous cell types. PB-cadherins may have a role in the morphological organization of pituitary gland and brain tissues (By similarity).</text>
</comment>
<comment type="subcellular location">
    <subcellularLocation>
        <location evidence="1">Cell membrane</location>
        <topology evidence="1">Single-pass type I membrane protein</topology>
    </subcellularLocation>
</comment>
<comment type="domain">
    <text evidence="1">Three calcium ions are usually bound at the interface of each cadherin domain and rigidify the connections, imparting a strong curvature to the full-length ectodomain.</text>
</comment>
<name>CAD22_HUMAN</name>
<organism>
    <name type="scientific">Homo sapiens</name>
    <name type="common">Human</name>
    <dbReference type="NCBI Taxonomy" id="9606"/>
    <lineage>
        <taxon>Eukaryota</taxon>
        <taxon>Metazoa</taxon>
        <taxon>Chordata</taxon>
        <taxon>Craniata</taxon>
        <taxon>Vertebrata</taxon>
        <taxon>Euteleostomi</taxon>
        <taxon>Mammalia</taxon>
        <taxon>Eutheria</taxon>
        <taxon>Euarchontoglires</taxon>
        <taxon>Primates</taxon>
        <taxon>Haplorrhini</taxon>
        <taxon>Catarrhini</taxon>
        <taxon>Hominidae</taxon>
        <taxon>Homo</taxon>
    </lineage>
</organism>
<feature type="signal peptide" evidence="2">
    <location>
        <begin position="1"/>
        <end position="34"/>
    </location>
</feature>
<feature type="chain" id="PRO_0000003821" description="Cadherin-22">
    <location>
        <begin position="35"/>
        <end position="828"/>
    </location>
</feature>
<feature type="topological domain" description="Extracellular" evidence="2">
    <location>
        <begin position="36"/>
        <end position="624"/>
    </location>
</feature>
<feature type="transmembrane region" description="Helical" evidence="2">
    <location>
        <begin position="625"/>
        <end position="645"/>
    </location>
</feature>
<feature type="topological domain" description="Cytoplasmic" evidence="2">
    <location>
        <begin position="646"/>
        <end position="828"/>
    </location>
</feature>
<feature type="domain" description="Cadherin 1" evidence="3">
    <location>
        <begin position="64"/>
        <end position="168"/>
    </location>
</feature>
<feature type="domain" description="Cadherin 2" evidence="3">
    <location>
        <begin position="169"/>
        <end position="277"/>
    </location>
</feature>
<feature type="domain" description="Cadherin 3" evidence="3">
    <location>
        <begin position="278"/>
        <end position="394"/>
    </location>
</feature>
<feature type="domain" description="Cadherin 4" evidence="3">
    <location>
        <begin position="395"/>
        <end position="498"/>
    </location>
</feature>
<feature type="domain" description="Cadherin 5" evidence="3">
    <location>
        <begin position="499"/>
        <end position="616"/>
    </location>
</feature>
<feature type="region of interest" description="Disordered" evidence="4">
    <location>
        <begin position="702"/>
        <end position="745"/>
    </location>
</feature>
<feature type="compositionally biased region" description="Gly residues" evidence="4">
    <location>
        <begin position="702"/>
        <end position="719"/>
    </location>
</feature>
<feature type="glycosylation site" description="N-linked (GlcNAc...) asparagine" evidence="2">
    <location>
        <position position="162"/>
    </location>
</feature>
<feature type="glycosylation site" description="N-linked (GlcNAc...) asparagine" evidence="2">
    <location>
        <position position="466"/>
    </location>
</feature>
<feature type="glycosylation site" description="N-linked (GlcNAc...) asparagine" evidence="2">
    <location>
        <position position="612"/>
    </location>
</feature>
<sequence>MRPRPEGRGLRAGVALSPALLLLLLLPPPPTLLGRLWAAGTPSPSAPGARQDGALGAGRVKRGWVWNQFFVVEEYTGTEPLYVGKIHSDSDEGDGAIKYTISGEGAGTIFLIDELTGDIHAMERLDREQKTFYTLRAQARDRATNRLLEPESEFIIKVQDINDSEPRFLHGPYIGSVAELSPTGTSVMQVMASDADDPTYGSSARLVYSVLDGEHHFTVDPKTGVIRTAVPDLDRESQERYEVVIQATDMAGQLGGLSGSTTVTIVVTDVNDNPPRFPQKMYQFSIQESAPIGTAVGRVKAEDSDVGENTDMTYHLKDESSSGGDVFKVTTDSDTQEAIIVVQKRLDFESQPVHTVILEALNKFVDPRFADLGTFRDQAIVRVAVTDVDEPPEFRPPSGLLEVQEDAQVGSLVGVVTARDPDAANRPVRYAIDRESDLDQIFDIDADTGAIVTGKGLDRETAGWHNITVLAMEADNHAQLSRASLRIRILDVNDNPPELATPYEAAVCEDAKPGQLIQTISVVDRDEPQGGHRFYFRLVPEAPSNPHFSLLDIQDNTAAVHTQHVGFNRQEQDVFFLPILVVDSGPPTLSSTGTLTIRICGCDSSGTIQSCNTTAFVMAASLSPGALIALLVCVLILVVLVLLILTLRRHHKSHLSSDEDEDMRDNVIKYNDEGGGEQDTEAYDMSALRSLYDFGELKGGDGGGSAGGGAGGGSGGGAGSPPQAHLPSERHSLPQGPPSPEPDFSVFRDFISRKVALADGDLSVPPYDAFQTYAFEGADSPAASLSSLHSGSSGSEQDFAYLSSWGPRFRPLAALYAGHRGDDEAQAS</sequence>
<keyword id="KW-0106">Calcium</keyword>
<keyword id="KW-0130">Cell adhesion</keyword>
<keyword id="KW-1003">Cell membrane</keyword>
<keyword id="KW-0325">Glycoprotein</keyword>
<keyword id="KW-0472">Membrane</keyword>
<keyword id="KW-0479">Metal-binding</keyword>
<keyword id="KW-1267">Proteomics identification</keyword>
<keyword id="KW-1185">Reference proteome</keyword>
<keyword id="KW-0677">Repeat</keyword>
<keyword id="KW-0732">Signal</keyword>
<keyword id="KW-0812">Transmembrane</keyword>
<keyword id="KW-1133">Transmembrane helix</keyword>